<comment type="function">
    <text evidence="1">Involved in the biosynthesis of branched-chain amino acids (BCAA). Catalyzes an alkyl-migration followed by a ketol-acid reduction of (S)-2-acetolactate (S2AL) to yield (R)-2,3-dihydroxy-isovalerate. In the isomerase reaction, S2AL is rearranged via a Mg-dependent methyl migration to produce 3-hydroxy-3-methyl-2-ketobutyrate (HMKB). In the reductase reaction, this 2-ketoacid undergoes a metal-dependent reduction by NADPH to yield (R)-2,3-dihydroxy-isovalerate.</text>
</comment>
<comment type="catalytic activity">
    <reaction evidence="1">
        <text>(2R)-2,3-dihydroxy-3-methylbutanoate + NADP(+) = (2S)-2-acetolactate + NADPH + H(+)</text>
        <dbReference type="Rhea" id="RHEA:22068"/>
        <dbReference type="ChEBI" id="CHEBI:15378"/>
        <dbReference type="ChEBI" id="CHEBI:49072"/>
        <dbReference type="ChEBI" id="CHEBI:57783"/>
        <dbReference type="ChEBI" id="CHEBI:58349"/>
        <dbReference type="ChEBI" id="CHEBI:58476"/>
        <dbReference type="EC" id="1.1.1.86"/>
    </reaction>
</comment>
<comment type="catalytic activity">
    <reaction evidence="1">
        <text>(2R,3R)-2,3-dihydroxy-3-methylpentanoate + NADP(+) = (S)-2-ethyl-2-hydroxy-3-oxobutanoate + NADPH + H(+)</text>
        <dbReference type="Rhea" id="RHEA:13493"/>
        <dbReference type="ChEBI" id="CHEBI:15378"/>
        <dbReference type="ChEBI" id="CHEBI:49256"/>
        <dbReference type="ChEBI" id="CHEBI:49258"/>
        <dbReference type="ChEBI" id="CHEBI:57783"/>
        <dbReference type="ChEBI" id="CHEBI:58349"/>
        <dbReference type="EC" id="1.1.1.86"/>
    </reaction>
</comment>
<comment type="cofactor">
    <cofactor evidence="1">
        <name>Mg(2+)</name>
        <dbReference type="ChEBI" id="CHEBI:18420"/>
    </cofactor>
    <text evidence="1">Binds 2 magnesium ions per subunit.</text>
</comment>
<comment type="pathway">
    <text evidence="1">Amino-acid biosynthesis; L-isoleucine biosynthesis; L-isoleucine from 2-oxobutanoate: step 2/4.</text>
</comment>
<comment type="pathway">
    <text evidence="1">Amino-acid biosynthesis; L-valine biosynthesis; L-valine from pyruvate: step 2/4.</text>
</comment>
<comment type="similarity">
    <text evidence="1">Belongs to the ketol-acid reductoisomerase family.</text>
</comment>
<dbReference type="EC" id="1.1.1.86" evidence="1"/>
<dbReference type="EMBL" id="CP000090">
    <property type="protein sequence ID" value="AAZ60328.1"/>
    <property type="molecule type" value="Genomic_DNA"/>
</dbReference>
<dbReference type="SMR" id="Q473V5"/>
<dbReference type="STRING" id="264198.Reut_A0949"/>
<dbReference type="KEGG" id="reu:Reut_A0949"/>
<dbReference type="eggNOG" id="COG0059">
    <property type="taxonomic scope" value="Bacteria"/>
</dbReference>
<dbReference type="HOGENOM" id="CLU_033821_0_1_4"/>
<dbReference type="OrthoDB" id="9804088at2"/>
<dbReference type="UniPathway" id="UPA00047">
    <property type="reaction ID" value="UER00056"/>
</dbReference>
<dbReference type="UniPathway" id="UPA00049">
    <property type="reaction ID" value="UER00060"/>
</dbReference>
<dbReference type="GO" id="GO:0005829">
    <property type="term" value="C:cytosol"/>
    <property type="evidence" value="ECO:0007669"/>
    <property type="project" value="TreeGrafter"/>
</dbReference>
<dbReference type="GO" id="GO:0004455">
    <property type="term" value="F:ketol-acid reductoisomerase activity"/>
    <property type="evidence" value="ECO:0007669"/>
    <property type="project" value="UniProtKB-UniRule"/>
</dbReference>
<dbReference type="GO" id="GO:0000287">
    <property type="term" value="F:magnesium ion binding"/>
    <property type="evidence" value="ECO:0007669"/>
    <property type="project" value="UniProtKB-UniRule"/>
</dbReference>
<dbReference type="GO" id="GO:0050661">
    <property type="term" value="F:NADP binding"/>
    <property type="evidence" value="ECO:0007669"/>
    <property type="project" value="InterPro"/>
</dbReference>
<dbReference type="GO" id="GO:0009097">
    <property type="term" value="P:isoleucine biosynthetic process"/>
    <property type="evidence" value="ECO:0007669"/>
    <property type="project" value="UniProtKB-UniRule"/>
</dbReference>
<dbReference type="GO" id="GO:0009099">
    <property type="term" value="P:L-valine biosynthetic process"/>
    <property type="evidence" value="ECO:0007669"/>
    <property type="project" value="UniProtKB-UniRule"/>
</dbReference>
<dbReference type="FunFam" id="3.40.50.720:FF:000023">
    <property type="entry name" value="Ketol-acid reductoisomerase (NADP(+))"/>
    <property type="match status" value="1"/>
</dbReference>
<dbReference type="Gene3D" id="6.10.240.10">
    <property type="match status" value="1"/>
</dbReference>
<dbReference type="Gene3D" id="3.40.50.720">
    <property type="entry name" value="NAD(P)-binding Rossmann-like Domain"/>
    <property type="match status" value="1"/>
</dbReference>
<dbReference type="HAMAP" id="MF_00435">
    <property type="entry name" value="IlvC"/>
    <property type="match status" value="1"/>
</dbReference>
<dbReference type="InterPro" id="IPR008927">
    <property type="entry name" value="6-PGluconate_DH-like_C_sf"/>
</dbReference>
<dbReference type="InterPro" id="IPR013023">
    <property type="entry name" value="KARI"/>
</dbReference>
<dbReference type="InterPro" id="IPR000506">
    <property type="entry name" value="KARI_C"/>
</dbReference>
<dbReference type="InterPro" id="IPR013116">
    <property type="entry name" value="KARI_N"/>
</dbReference>
<dbReference type="InterPro" id="IPR014359">
    <property type="entry name" value="KARI_prok"/>
</dbReference>
<dbReference type="InterPro" id="IPR036291">
    <property type="entry name" value="NAD(P)-bd_dom_sf"/>
</dbReference>
<dbReference type="NCBIfam" id="TIGR00465">
    <property type="entry name" value="ilvC"/>
    <property type="match status" value="1"/>
</dbReference>
<dbReference type="NCBIfam" id="NF004017">
    <property type="entry name" value="PRK05479.1"/>
    <property type="match status" value="1"/>
</dbReference>
<dbReference type="NCBIfam" id="NF009940">
    <property type="entry name" value="PRK13403.1"/>
    <property type="match status" value="1"/>
</dbReference>
<dbReference type="PANTHER" id="PTHR21371">
    <property type="entry name" value="KETOL-ACID REDUCTOISOMERASE, MITOCHONDRIAL"/>
    <property type="match status" value="1"/>
</dbReference>
<dbReference type="PANTHER" id="PTHR21371:SF1">
    <property type="entry name" value="KETOL-ACID REDUCTOISOMERASE, MITOCHONDRIAL"/>
    <property type="match status" value="1"/>
</dbReference>
<dbReference type="Pfam" id="PF01450">
    <property type="entry name" value="KARI_C"/>
    <property type="match status" value="1"/>
</dbReference>
<dbReference type="Pfam" id="PF07991">
    <property type="entry name" value="KARI_N"/>
    <property type="match status" value="1"/>
</dbReference>
<dbReference type="PIRSF" id="PIRSF000116">
    <property type="entry name" value="IlvC_gammaproteo"/>
    <property type="match status" value="1"/>
</dbReference>
<dbReference type="SUPFAM" id="SSF48179">
    <property type="entry name" value="6-phosphogluconate dehydrogenase C-terminal domain-like"/>
    <property type="match status" value="1"/>
</dbReference>
<dbReference type="SUPFAM" id="SSF51735">
    <property type="entry name" value="NAD(P)-binding Rossmann-fold domains"/>
    <property type="match status" value="1"/>
</dbReference>
<dbReference type="PROSITE" id="PS51851">
    <property type="entry name" value="KARI_C"/>
    <property type="match status" value="1"/>
</dbReference>
<dbReference type="PROSITE" id="PS51850">
    <property type="entry name" value="KARI_N"/>
    <property type="match status" value="1"/>
</dbReference>
<sequence>MKVFYDKDADLSLIKGKNVTIIGYGSQGHAHALNLKDSGVNVTVGLRKSGASWNKAVNAGLQVKEVAEAVKGADVVMILLPDEQIADVYKNEVHDNIKAGAALAFAHGFNVHYGAVVPRADVDVIMIAPKAPGHTVRATYTQGGGVPHLIAVYQDKSGSARDVALSYATANGGGRAGIIETNFREETETDLFGEQAVLCGGTVELIKAGFETLVEAGYAPEMAYFECLHELKLIVDLIYEGGIANMNYSISNNAEYGEYVTGPRIVTEETKKAMKQCLKDIQTGEYAKSFLLENKAGAPTLSSRRRLNAEHQIEVVGEKLRAMMPWIAKNKMVDQSKN</sequence>
<feature type="chain" id="PRO_0000226195" description="Ketol-acid reductoisomerase (NADP(+))">
    <location>
        <begin position="1"/>
        <end position="338"/>
    </location>
</feature>
<feature type="domain" description="KARI N-terminal Rossmann" evidence="2">
    <location>
        <begin position="1"/>
        <end position="181"/>
    </location>
</feature>
<feature type="domain" description="KARI C-terminal knotted" evidence="3">
    <location>
        <begin position="182"/>
        <end position="327"/>
    </location>
</feature>
<feature type="active site" evidence="1">
    <location>
        <position position="107"/>
    </location>
</feature>
<feature type="binding site" evidence="1">
    <location>
        <begin position="24"/>
        <end position="27"/>
    </location>
    <ligand>
        <name>NADP(+)</name>
        <dbReference type="ChEBI" id="CHEBI:58349"/>
    </ligand>
</feature>
<feature type="binding site" evidence="1">
    <location>
        <position position="47"/>
    </location>
    <ligand>
        <name>NADP(+)</name>
        <dbReference type="ChEBI" id="CHEBI:58349"/>
    </ligand>
</feature>
<feature type="binding site" evidence="1">
    <location>
        <position position="52"/>
    </location>
    <ligand>
        <name>NADP(+)</name>
        <dbReference type="ChEBI" id="CHEBI:58349"/>
    </ligand>
</feature>
<feature type="binding site" evidence="1">
    <location>
        <position position="133"/>
    </location>
    <ligand>
        <name>NADP(+)</name>
        <dbReference type="ChEBI" id="CHEBI:58349"/>
    </ligand>
</feature>
<feature type="binding site" evidence="1">
    <location>
        <position position="190"/>
    </location>
    <ligand>
        <name>Mg(2+)</name>
        <dbReference type="ChEBI" id="CHEBI:18420"/>
        <label>1</label>
    </ligand>
</feature>
<feature type="binding site" evidence="1">
    <location>
        <position position="190"/>
    </location>
    <ligand>
        <name>Mg(2+)</name>
        <dbReference type="ChEBI" id="CHEBI:18420"/>
        <label>2</label>
    </ligand>
</feature>
<feature type="binding site" evidence="1">
    <location>
        <position position="194"/>
    </location>
    <ligand>
        <name>Mg(2+)</name>
        <dbReference type="ChEBI" id="CHEBI:18420"/>
        <label>1</label>
    </ligand>
</feature>
<feature type="binding site" evidence="1">
    <location>
        <position position="226"/>
    </location>
    <ligand>
        <name>Mg(2+)</name>
        <dbReference type="ChEBI" id="CHEBI:18420"/>
        <label>2</label>
    </ligand>
</feature>
<feature type="binding site" evidence="1">
    <location>
        <position position="230"/>
    </location>
    <ligand>
        <name>Mg(2+)</name>
        <dbReference type="ChEBI" id="CHEBI:18420"/>
        <label>2</label>
    </ligand>
</feature>
<feature type="binding site" evidence="1">
    <location>
        <position position="251"/>
    </location>
    <ligand>
        <name>substrate</name>
    </ligand>
</feature>
<accession>Q473V5</accession>
<organism>
    <name type="scientific">Cupriavidus pinatubonensis (strain JMP 134 / LMG 1197)</name>
    <name type="common">Cupriavidus necator (strain JMP 134)</name>
    <dbReference type="NCBI Taxonomy" id="264198"/>
    <lineage>
        <taxon>Bacteria</taxon>
        <taxon>Pseudomonadati</taxon>
        <taxon>Pseudomonadota</taxon>
        <taxon>Betaproteobacteria</taxon>
        <taxon>Burkholderiales</taxon>
        <taxon>Burkholderiaceae</taxon>
        <taxon>Cupriavidus</taxon>
    </lineage>
</organism>
<gene>
    <name evidence="1" type="primary">ilvC</name>
    <name type="ordered locus">Reut_A0949</name>
</gene>
<reference key="1">
    <citation type="journal article" date="2010" name="PLoS ONE">
        <title>The complete multipartite genome sequence of Cupriavidus necator JMP134, a versatile pollutant degrader.</title>
        <authorList>
            <person name="Lykidis A."/>
            <person name="Perez-Pantoja D."/>
            <person name="Ledger T."/>
            <person name="Mavromatis K."/>
            <person name="Anderson I.J."/>
            <person name="Ivanova N.N."/>
            <person name="Hooper S.D."/>
            <person name="Lapidus A."/>
            <person name="Lucas S."/>
            <person name="Gonzalez B."/>
            <person name="Kyrpides N.C."/>
        </authorList>
    </citation>
    <scope>NUCLEOTIDE SEQUENCE [LARGE SCALE GENOMIC DNA]</scope>
    <source>
        <strain>JMP134 / LMG 1197</strain>
    </source>
</reference>
<name>ILVC_CUPPJ</name>
<protein>
    <recommendedName>
        <fullName evidence="1">Ketol-acid reductoisomerase (NADP(+))</fullName>
        <shortName evidence="1">KARI</shortName>
        <ecNumber evidence="1">1.1.1.86</ecNumber>
    </recommendedName>
    <alternativeName>
        <fullName evidence="1">Acetohydroxy-acid isomeroreductase</fullName>
        <shortName evidence="1">AHIR</shortName>
    </alternativeName>
    <alternativeName>
        <fullName evidence="1">Alpha-keto-beta-hydroxylacyl reductoisomerase</fullName>
    </alternativeName>
    <alternativeName>
        <fullName evidence="1">Ketol-acid reductoisomerase type 1</fullName>
    </alternativeName>
    <alternativeName>
        <fullName evidence="1">Ketol-acid reductoisomerase type I</fullName>
    </alternativeName>
</protein>
<proteinExistence type="inferred from homology"/>
<keyword id="KW-0028">Amino-acid biosynthesis</keyword>
<keyword id="KW-0100">Branched-chain amino acid biosynthesis</keyword>
<keyword id="KW-0460">Magnesium</keyword>
<keyword id="KW-0479">Metal-binding</keyword>
<keyword id="KW-0521">NADP</keyword>
<keyword id="KW-0560">Oxidoreductase</keyword>
<evidence type="ECO:0000255" key="1">
    <source>
        <dbReference type="HAMAP-Rule" id="MF_00435"/>
    </source>
</evidence>
<evidence type="ECO:0000255" key="2">
    <source>
        <dbReference type="PROSITE-ProRule" id="PRU01197"/>
    </source>
</evidence>
<evidence type="ECO:0000255" key="3">
    <source>
        <dbReference type="PROSITE-ProRule" id="PRU01198"/>
    </source>
</evidence>